<gene>
    <name evidence="1" type="primary">dapF</name>
    <name type="ordered locus">aq_1838</name>
</gene>
<keyword id="KW-0028">Amino-acid biosynthesis</keyword>
<keyword id="KW-0963">Cytoplasm</keyword>
<keyword id="KW-0413">Isomerase</keyword>
<keyword id="KW-0457">Lysine biosynthesis</keyword>
<keyword id="KW-1185">Reference proteome</keyword>
<protein>
    <recommendedName>
        <fullName evidence="1">Diaminopimelate epimerase</fullName>
        <shortName evidence="1">DAP epimerase</shortName>
        <ecNumber evidence="1">5.1.1.7</ecNumber>
    </recommendedName>
    <alternativeName>
        <fullName evidence="1">PLP-independent amino acid racemase</fullName>
    </alternativeName>
</protein>
<feature type="chain" id="PRO_0000149818" description="Diaminopimelate epimerase">
    <location>
        <begin position="1"/>
        <end position="279"/>
    </location>
</feature>
<feature type="active site" description="Proton donor" evidence="1">
    <location>
        <position position="81"/>
    </location>
</feature>
<feature type="active site" description="Proton acceptor" evidence="1">
    <location>
        <position position="215"/>
    </location>
</feature>
<feature type="binding site" evidence="1">
    <location>
        <position position="11"/>
    </location>
    <ligand>
        <name>substrate</name>
    </ligand>
</feature>
<feature type="binding site" evidence="1">
    <location>
        <position position="72"/>
    </location>
    <ligand>
        <name>substrate</name>
    </ligand>
</feature>
<feature type="binding site" evidence="1">
    <location>
        <begin position="82"/>
        <end position="83"/>
    </location>
    <ligand>
        <name>substrate</name>
    </ligand>
</feature>
<feature type="binding site" evidence="1">
    <location>
        <position position="187"/>
    </location>
    <ligand>
        <name>substrate</name>
    </ligand>
</feature>
<feature type="binding site" evidence="1">
    <location>
        <begin position="205"/>
        <end position="206"/>
    </location>
    <ligand>
        <name>substrate</name>
    </ligand>
</feature>
<feature type="binding site" evidence="1">
    <location>
        <begin position="216"/>
        <end position="217"/>
    </location>
    <ligand>
        <name>substrate</name>
    </ligand>
</feature>
<feature type="site" description="Could be important to modulate the pK values of the two catalytic cysteine residues" evidence="1">
    <location>
        <position position="155"/>
    </location>
</feature>
<feature type="site" description="Could be important to modulate the pK values of the two catalytic cysteine residues" evidence="1">
    <location>
        <position position="205"/>
    </location>
</feature>
<accession>O67693</accession>
<evidence type="ECO:0000255" key="1">
    <source>
        <dbReference type="HAMAP-Rule" id="MF_00197"/>
    </source>
</evidence>
<organism>
    <name type="scientific">Aquifex aeolicus (strain VF5)</name>
    <dbReference type="NCBI Taxonomy" id="224324"/>
    <lineage>
        <taxon>Bacteria</taxon>
        <taxon>Pseudomonadati</taxon>
        <taxon>Aquificota</taxon>
        <taxon>Aquificia</taxon>
        <taxon>Aquificales</taxon>
        <taxon>Aquificaceae</taxon>
        <taxon>Aquifex</taxon>
    </lineage>
</organism>
<name>DAPF_AQUAE</name>
<dbReference type="EC" id="5.1.1.7" evidence="1"/>
<dbReference type="EMBL" id="AE000657">
    <property type="protein sequence ID" value="AAC07649.1"/>
    <property type="molecule type" value="Genomic_DNA"/>
</dbReference>
<dbReference type="PIR" id="C70458">
    <property type="entry name" value="C70458"/>
</dbReference>
<dbReference type="RefSeq" id="NP_214260.1">
    <property type="nucleotide sequence ID" value="NC_000918.1"/>
</dbReference>
<dbReference type="RefSeq" id="WP_010881196.1">
    <property type="nucleotide sequence ID" value="NC_000918.1"/>
</dbReference>
<dbReference type="SMR" id="O67693"/>
<dbReference type="FunCoup" id="O67693">
    <property type="interactions" value="501"/>
</dbReference>
<dbReference type="STRING" id="224324.aq_1838"/>
<dbReference type="EnsemblBacteria" id="AAC07649">
    <property type="protein sequence ID" value="AAC07649"/>
    <property type="gene ID" value="aq_1838"/>
</dbReference>
<dbReference type="KEGG" id="aae:aq_1838"/>
<dbReference type="PATRIC" id="fig|224324.8.peg.1417"/>
<dbReference type="eggNOG" id="COG0253">
    <property type="taxonomic scope" value="Bacteria"/>
</dbReference>
<dbReference type="HOGENOM" id="CLU_053306_3_2_0"/>
<dbReference type="InParanoid" id="O67693"/>
<dbReference type="OrthoDB" id="9805408at2"/>
<dbReference type="UniPathway" id="UPA00034">
    <property type="reaction ID" value="UER00025"/>
</dbReference>
<dbReference type="Proteomes" id="UP000000798">
    <property type="component" value="Chromosome"/>
</dbReference>
<dbReference type="GO" id="GO:0005829">
    <property type="term" value="C:cytosol"/>
    <property type="evidence" value="ECO:0000318"/>
    <property type="project" value="GO_Central"/>
</dbReference>
<dbReference type="GO" id="GO:0008837">
    <property type="term" value="F:diaminopimelate epimerase activity"/>
    <property type="evidence" value="ECO:0000318"/>
    <property type="project" value="GO_Central"/>
</dbReference>
<dbReference type="GO" id="GO:0009089">
    <property type="term" value="P:lysine biosynthetic process via diaminopimelate"/>
    <property type="evidence" value="ECO:0000318"/>
    <property type="project" value="GO_Central"/>
</dbReference>
<dbReference type="FunFam" id="3.10.310.10:FF:000001">
    <property type="entry name" value="Diaminopimelate epimerase"/>
    <property type="match status" value="1"/>
</dbReference>
<dbReference type="Gene3D" id="3.10.310.10">
    <property type="entry name" value="Diaminopimelate Epimerase, Chain A, domain 1"/>
    <property type="match status" value="2"/>
</dbReference>
<dbReference type="HAMAP" id="MF_00197">
    <property type="entry name" value="DAP_epimerase"/>
    <property type="match status" value="1"/>
</dbReference>
<dbReference type="InterPro" id="IPR018510">
    <property type="entry name" value="DAP_epimerase_AS"/>
</dbReference>
<dbReference type="InterPro" id="IPR001653">
    <property type="entry name" value="DAP_epimerase_DapF"/>
</dbReference>
<dbReference type="NCBIfam" id="TIGR00652">
    <property type="entry name" value="DapF"/>
    <property type="match status" value="1"/>
</dbReference>
<dbReference type="PANTHER" id="PTHR31689:SF0">
    <property type="entry name" value="DIAMINOPIMELATE EPIMERASE"/>
    <property type="match status" value="1"/>
</dbReference>
<dbReference type="PANTHER" id="PTHR31689">
    <property type="entry name" value="DIAMINOPIMELATE EPIMERASE, CHLOROPLASTIC"/>
    <property type="match status" value="1"/>
</dbReference>
<dbReference type="Pfam" id="PF01678">
    <property type="entry name" value="DAP_epimerase"/>
    <property type="match status" value="2"/>
</dbReference>
<dbReference type="SUPFAM" id="SSF54506">
    <property type="entry name" value="Diaminopimelate epimerase-like"/>
    <property type="match status" value="2"/>
</dbReference>
<dbReference type="PROSITE" id="PS01326">
    <property type="entry name" value="DAP_EPIMERASE"/>
    <property type="match status" value="1"/>
</dbReference>
<proteinExistence type="inferred from homology"/>
<comment type="function">
    <text evidence="1">Catalyzes the stereoinversion of LL-2,6-diaminopimelate (L,L-DAP) to meso-diaminopimelate (meso-DAP), a precursor of L-lysine and an essential component of the bacterial peptidoglycan.</text>
</comment>
<comment type="catalytic activity">
    <reaction evidence="1">
        <text>(2S,6S)-2,6-diaminopimelate = meso-2,6-diaminopimelate</text>
        <dbReference type="Rhea" id="RHEA:15393"/>
        <dbReference type="ChEBI" id="CHEBI:57609"/>
        <dbReference type="ChEBI" id="CHEBI:57791"/>
        <dbReference type="EC" id="5.1.1.7"/>
    </reaction>
</comment>
<comment type="pathway">
    <text evidence="1">Amino-acid biosynthesis; L-lysine biosynthesis via DAP pathway; DL-2,6-diaminopimelate from LL-2,6-diaminopimelate: step 1/1.</text>
</comment>
<comment type="subunit">
    <text evidence="1">Homodimer.</text>
</comment>
<comment type="subcellular location">
    <subcellularLocation>
        <location evidence="1">Cytoplasm</location>
    </subcellularLocation>
</comment>
<comment type="similarity">
    <text evidence="1">Belongs to the diaminopimelate epimerase family.</text>
</comment>
<reference key="1">
    <citation type="journal article" date="1998" name="Nature">
        <title>The complete genome of the hyperthermophilic bacterium Aquifex aeolicus.</title>
        <authorList>
            <person name="Deckert G."/>
            <person name="Warren P.V."/>
            <person name="Gaasterland T."/>
            <person name="Young W.G."/>
            <person name="Lenox A.L."/>
            <person name="Graham D.E."/>
            <person name="Overbeek R."/>
            <person name="Snead M.A."/>
            <person name="Keller M."/>
            <person name="Aujay M."/>
            <person name="Huber R."/>
            <person name="Feldman R.A."/>
            <person name="Short J.M."/>
            <person name="Olsen G.J."/>
            <person name="Swanson R.V."/>
        </authorList>
    </citation>
    <scope>NUCLEOTIDE SEQUENCE [LARGE SCALE GENOMIC DNA]</scope>
    <source>
        <strain>VF5</strain>
    </source>
</reference>
<sequence>MEFWKLQGSGNDFVVIDDRDEKLESFLKERGVSKEDFVRKVCAFHTGVGADGLILIKNPDNPENDFKWEFFNSDGSVAEMCGNGSRCAVRFAYERGIVGNKVRFETLAGVIKAEVYENGRKVKVQLTPPSKPEEKTLTVDGEEVIGVFINTGVPHFVVPVEDVEKVNVIKLGRAIRFHEEFQPKGTNVNFVQPVSEDTIKVRTYERGVESETLACGTGATACAIVSYLKGLVKKKPVNVLTRSGEVLTIDFSEDLKEVFLTGSVYKVFEGRLSEEVLEY</sequence>